<reference key="1">
    <citation type="submission" date="2008-01" db="EMBL/GenBank/DDBJ databases">
        <title>Complete sequence of Pseudomonas putida GB-1.</title>
        <authorList>
            <consortium name="US DOE Joint Genome Institute"/>
            <person name="Copeland A."/>
            <person name="Lucas S."/>
            <person name="Lapidus A."/>
            <person name="Barry K."/>
            <person name="Glavina del Rio T."/>
            <person name="Dalin E."/>
            <person name="Tice H."/>
            <person name="Pitluck S."/>
            <person name="Bruce D."/>
            <person name="Goodwin L."/>
            <person name="Chertkov O."/>
            <person name="Brettin T."/>
            <person name="Detter J.C."/>
            <person name="Han C."/>
            <person name="Kuske C.R."/>
            <person name="Schmutz J."/>
            <person name="Larimer F."/>
            <person name="Land M."/>
            <person name="Hauser L."/>
            <person name="Kyrpides N."/>
            <person name="Kim E."/>
            <person name="McCarthy J.K."/>
            <person name="Richardson P."/>
        </authorList>
    </citation>
    <scope>NUCLEOTIDE SEQUENCE [LARGE SCALE GENOMIC DNA]</scope>
    <source>
        <strain>GB-1</strain>
    </source>
</reference>
<dbReference type="EC" id="6.1.1.11" evidence="1"/>
<dbReference type="EMBL" id="CP000926">
    <property type="protein sequence ID" value="ABY99496.1"/>
    <property type="molecule type" value="Genomic_DNA"/>
</dbReference>
<dbReference type="RefSeq" id="WP_012273209.1">
    <property type="nucleotide sequence ID" value="NC_010322.1"/>
</dbReference>
<dbReference type="SMR" id="B0KLW8"/>
<dbReference type="KEGG" id="ppg:PputGB1_3605"/>
<dbReference type="eggNOG" id="COG0172">
    <property type="taxonomic scope" value="Bacteria"/>
</dbReference>
<dbReference type="HOGENOM" id="CLU_023797_1_1_6"/>
<dbReference type="UniPathway" id="UPA00906">
    <property type="reaction ID" value="UER00895"/>
</dbReference>
<dbReference type="Proteomes" id="UP000002157">
    <property type="component" value="Chromosome"/>
</dbReference>
<dbReference type="GO" id="GO:0005737">
    <property type="term" value="C:cytoplasm"/>
    <property type="evidence" value="ECO:0007669"/>
    <property type="project" value="UniProtKB-SubCell"/>
</dbReference>
<dbReference type="GO" id="GO:0005524">
    <property type="term" value="F:ATP binding"/>
    <property type="evidence" value="ECO:0007669"/>
    <property type="project" value="UniProtKB-UniRule"/>
</dbReference>
<dbReference type="GO" id="GO:0004828">
    <property type="term" value="F:serine-tRNA ligase activity"/>
    <property type="evidence" value="ECO:0007669"/>
    <property type="project" value="UniProtKB-UniRule"/>
</dbReference>
<dbReference type="GO" id="GO:0016260">
    <property type="term" value="P:selenocysteine biosynthetic process"/>
    <property type="evidence" value="ECO:0007669"/>
    <property type="project" value="UniProtKB-UniRule"/>
</dbReference>
<dbReference type="GO" id="GO:0006434">
    <property type="term" value="P:seryl-tRNA aminoacylation"/>
    <property type="evidence" value="ECO:0007669"/>
    <property type="project" value="UniProtKB-UniRule"/>
</dbReference>
<dbReference type="CDD" id="cd00770">
    <property type="entry name" value="SerRS_core"/>
    <property type="match status" value="1"/>
</dbReference>
<dbReference type="Gene3D" id="3.30.930.10">
    <property type="entry name" value="Bira Bifunctional Protein, Domain 2"/>
    <property type="match status" value="1"/>
</dbReference>
<dbReference type="Gene3D" id="1.10.287.40">
    <property type="entry name" value="Serine-tRNA synthetase, tRNA binding domain"/>
    <property type="match status" value="1"/>
</dbReference>
<dbReference type="HAMAP" id="MF_00176">
    <property type="entry name" value="Ser_tRNA_synth_type1"/>
    <property type="match status" value="1"/>
</dbReference>
<dbReference type="InterPro" id="IPR002314">
    <property type="entry name" value="aa-tRNA-synt_IIb"/>
</dbReference>
<dbReference type="InterPro" id="IPR006195">
    <property type="entry name" value="aa-tRNA-synth_II"/>
</dbReference>
<dbReference type="InterPro" id="IPR045864">
    <property type="entry name" value="aa-tRNA-synth_II/BPL/LPL"/>
</dbReference>
<dbReference type="InterPro" id="IPR002317">
    <property type="entry name" value="Ser-tRNA-ligase_type_1"/>
</dbReference>
<dbReference type="InterPro" id="IPR015866">
    <property type="entry name" value="Ser-tRNA-synth_1_N"/>
</dbReference>
<dbReference type="InterPro" id="IPR042103">
    <property type="entry name" value="SerRS_1_N_sf"/>
</dbReference>
<dbReference type="InterPro" id="IPR033729">
    <property type="entry name" value="SerRS_core"/>
</dbReference>
<dbReference type="InterPro" id="IPR010978">
    <property type="entry name" value="tRNA-bd_arm"/>
</dbReference>
<dbReference type="NCBIfam" id="TIGR00414">
    <property type="entry name" value="serS"/>
    <property type="match status" value="1"/>
</dbReference>
<dbReference type="PANTHER" id="PTHR43697:SF1">
    <property type="entry name" value="SERINE--TRNA LIGASE"/>
    <property type="match status" value="1"/>
</dbReference>
<dbReference type="PANTHER" id="PTHR43697">
    <property type="entry name" value="SERYL-TRNA SYNTHETASE"/>
    <property type="match status" value="1"/>
</dbReference>
<dbReference type="Pfam" id="PF02403">
    <property type="entry name" value="Seryl_tRNA_N"/>
    <property type="match status" value="1"/>
</dbReference>
<dbReference type="Pfam" id="PF00587">
    <property type="entry name" value="tRNA-synt_2b"/>
    <property type="match status" value="1"/>
</dbReference>
<dbReference type="PIRSF" id="PIRSF001529">
    <property type="entry name" value="Ser-tRNA-synth_IIa"/>
    <property type="match status" value="1"/>
</dbReference>
<dbReference type="PRINTS" id="PR00981">
    <property type="entry name" value="TRNASYNTHSER"/>
</dbReference>
<dbReference type="SUPFAM" id="SSF55681">
    <property type="entry name" value="Class II aaRS and biotin synthetases"/>
    <property type="match status" value="1"/>
</dbReference>
<dbReference type="SUPFAM" id="SSF46589">
    <property type="entry name" value="tRNA-binding arm"/>
    <property type="match status" value="1"/>
</dbReference>
<dbReference type="PROSITE" id="PS50862">
    <property type="entry name" value="AA_TRNA_LIGASE_II"/>
    <property type="match status" value="1"/>
</dbReference>
<protein>
    <recommendedName>
        <fullName evidence="1">Serine--tRNA ligase</fullName>
        <ecNumber evidence="1">6.1.1.11</ecNumber>
    </recommendedName>
    <alternativeName>
        <fullName evidence="1">Seryl-tRNA synthetase</fullName>
        <shortName evidence="1">SerRS</shortName>
    </alternativeName>
    <alternativeName>
        <fullName evidence="1">Seryl-tRNA(Ser/Sec) synthetase</fullName>
    </alternativeName>
</protein>
<proteinExistence type="inferred from homology"/>
<comment type="function">
    <text evidence="1">Catalyzes the attachment of serine to tRNA(Ser). Is also able to aminoacylate tRNA(Sec) with serine, to form the misacylated tRNA L-seryl-tRNA(Sec), which will be further converted into selenocysteinyl-tRNA(Sec).</text>
</comment>
<comment type="catalytic activity">
    <reaction evidence="1">
        <text>tRNA(Ser) + L-serine + ATP = L-seryl-tRNA(Ser) + AMP + diphosphate + H(+)</text>
        <dbReference type="Rhea" id="RHEA:12292"/>
        <dbReference type="Rhea" id="RHEA-COMP:9669"/>
        <dbReference type="Rhea" id="RHEA-COMP:9703"/>
        <dbReference type="ChEBI" id="CHEBI:15378"/>
        <dbReference type="ChEBI" id="CHEBI:30616"/>
        <dbReference type="ChEBI" id="CHEBI:33019"/>
        <dbReference type="ChEBI" id="CHEBI:33384"/>
        <dbReference type="ChEBI" id="CHEBI:78442"/>
        <dbReference type="ChEBI" id="CHEBI:78533"/>
        <dbReference type="ChEBI" id="CHEBI:456215"/>
        <dbReference type="EC" id="6.1.1.11"/>
    </reaction>
</comment>
<comment type="catalytic activity">
    <reaction evidence="1">
        <text>tRNA(Sec) + L-serine + ATP = L-seryl-tRNA(Sec) + AMP + diphosphate + H(+)</text>
        <dbReference type="Rhea" id="RHEA:42580"/>
        <dbReference type="Rhea" id="RHEA-COMP:9742"/>
        <dbReference type="Rhea" id="RHEA-COMP:10128"/>
        <dbReference type="ChEBI" id="CHEBI:15378"/>
        <dbReference type="ChEBI" id="CHEBI:30616"/>
        <dbReference type="ChEBI" id="CHEBI:33019"/>
        <dbReference type="ChEBI" id="CHEBI:33384"/>
        <dbReference type="ChEBI" id="CHEBI:78442"/>
        <dbReference type="ChEBI" id="CHEBI:78533"/>
        <dbReference type="ChEBI" id="CHEBI:456215"/>
        <dbReference type="EC" id="6.1.1.11"/>
    </reaction>
</comment>
<comment type="pathway">
    <text evidence="1">Aminoacyl-tRNA biosynthesis; selenocysteinyl-tRNA(Sec) biosynthesis; L-seryl-tRNA(Sec) from L-serine and tRNA(Sec): step 1/1.</text>
</comment>
<comment type="subunit">
    <text evidence="1">Homodimer. The tRNA molecule binds across the dimer.</text>
</comment>
<comment type="subcellular location">
    <subcellularLocation>
        <location evidence="1">Cytoplasm</location>
    </subcellularLocation>
</comment>
<comment type="domain">
    <text evidence="1">Consists of two distinct domains, a catalytic core and a N-terminal extension that is involved in tRNA binding.</text>
</comment>
<comment type="similarity">
    <text evidence="1">Belongs to the class-II aminoacyl-tRNA synthetase family. Type-1 seryl-tRNA synthetase subfamily.</text>
</comment>
<sequence>MLDSKLLRGQLQEVADRLASRGFSLDVARIESLEERRKAVQTRTEQLQAERNARSKSIGQAKAKGEDIAPLMADVERMANELAAGKLELDGIQAELDGILLTIPNLPDASVPVGASEDDNVEVRRWGTPKAFDFEIKDHVALGEVSGGLDFEAAAKLSGARFAVLRGPIARLHRALAQFMINLHTGEHGYEEHYTPYLVQAPALQGTGQLPKFEEDLFKITREGEADFYLIPTAEVSLTNLVAGEILDAKQLPLKLVAHTPCFRSEAGASGRDTRGMIRQHQFDKVEMVQVVEPAKSMEALEGLTANAERVLQLLELPYRVLALCTGDMGFGAVKTYDLEVWVPSQDKYREISSCSNCGDFQARRMQARWRNPETGKPELVHTLNGSGLAVGRTLVAVLENYQQADGSILVPEVLKPYMGGVEVIR</sequence>
<gene>
    <name evidence="1" type="primary">serS</name>
    <name type="ordered locus">PputGB1_3605</name>
</gene>
<name>SYS_PSEPG</name>
<evidence type="ECO:0000255" key="1">
    <source>
        <dbReference type="HAMAP-Rule" id="MF_00176"/>
    </source>
</evidence>
<organism>
    <name type="scientific">Pseudomonas putida (strain GB-1)</name>
    <dbReference type="NCBI Taxonomy" id="76869"/>
    <lineage>
        <taxon>Bacteria</taxon>
        <taxon>Pseudomonadati</taxon>
        <taxon>Pseudomonadota</taxon>
        <taxon>Gammaproteobacteria</taxon>
        <taxon>Pseudomonadales</taxon>
        <taxon>Pseudomonadaceae</taxon>
        <taxon>Pseudomonas</taxon>
    </lineage>
</organism>
<feature type="chain" id="PRO_1000077208" description="Serine--tRNA ligase">
    <location>
        <begin position="1"/>
        <end position="426"/>
    </location>
</feature>
<feature type="binding site" evidence="1">
    <location>
        <begin position="233"/>
        <end position="235"/>
    </location>
    <ligand>
        <name>L-serine</name>
        <dbReference type="ChEBI" id="CHEBI:33384"/>
    </ligand>
</feature>
<feature type="binding site" evidence="1">
    <location>
        <begin position="264"/>
        <end position="266"/>
    </location>
    <ligand>
        <name>ATP</name>
        <dbReference type="ChEBI" id="CHEBI:30616"/>
    </ligand>
</feature>
<feature type="binding site" evidence="1">
    <location>
        <position position="287"/>
    </location>
    <ligand>
        <name>L-serine</name>
        <dbReference type="ChEBI" id="CHEBI:33384"/>
    </ligand>
</feature>
<feature type="binding site" evidence="1">
    <location>
        <begin position="351"/>
        <end position="354"/>
    </location>
    <ligand>
        <name>ATP</name>
        <dbReference type="ChEBI" id="CHEBI:30616"/>
    </ligand>
</feature>
<feature type="binding site" evidence="1">
    <location>
        <position position="387"/>
    </location>
    <ligand>
        <name>L-serine</name>
        <dbReference type="ChEBI" id="CHEBI:33384"/>
    </ligand>
</feature>
<accession>B0KLW8</accession>
<keyword id="KW-0030">Aminoacyl-tRNA synthetase</keyword>
<keyword id="KW-0067">ATP-binding</keyword>
<keyword id="KW-0963">Cytoplasm</keyword>
<keyword id="KW-0436">Ligase</keyword>
<keyword id="KW-0547">Nucleotide-binding</keyword>
<keyword id="KW-0648">Protein biosynthesis</keyword>